<organism evidence="7">
    <name type="scientific">Arabidopsis thaliana</name>
    <name type="common">Mouse-ear cress</name>
    <dbReference type="NCBI Taxonomy" id="3702"/>
    <lineage>
        <taxon>Eukaryota</taxon>
        <taxon>Viridiplantae</taxon>
        <taxon>Streptophyta</taxon>
        <taxon>Embryophyta</taxon>
        <taxon>Tracheophyta</taxon>
        <taxon>Spermatophyta</taxon>
        <taxon>Magnoliopsida</taxon>
        <taxon>eudicotyledons</taxon>
        <taxon>Gunneridae</taxon>
        <taxon>Pentapetalae</taxon>
        <taxon>rosids</taxon>
        <taxon>malvids</taxon>
        <taxon>Brassicales</taxon>
        <taxon>Brassicaceae</taxon>
        <taxon>Camelineae</taxon>
        <taxon>Arabidopsis</taxon>
    </lineage>
</organism>
<comment type="catalytic activity">
    <reaction evidence="1">
        <text>ATP + H2O = ADP + phosphate + H(+)</text>
        <dbReference type="Rhea" id="RHEA:13065"/>
        <dbReference type="ChEBI" id="CHEBI:15377"/>
        <dbReference type="ChEBI" id="CHEBI:15378"/>
        <dbReference type="ChEBI" id="CHEBI:30616"/>
        <dbReference type="ChEBI" id="CHEBI:43474"/>
        <dbReference type="ChEBI" id="CHEBI:456216"/>
    </reaction>
</comment>
<comment type="cofactor">
    <cofactor evidence="1">
        <name>Mg(2+)</name>
        <dbReference type="ChEBI" id="CHEBI:18420"/>
    </cofactor>
</comment>
<comment type="subcellular location">
    <subcellularLocation>
        <location evidence="2">Membrane</location>
        <topology evidence="2">Single-pass membrane protein</topology>
    </subcellularLocation>
</comment>
<comment type="alternative products">
    <event type="alternative splicing"/>
    <isoform>
        <id>Q9FN75-1</id>
        <name>1</name>
        <sequence type="displayed"/>
    </isoform>
    <isoform>
        <id>Q9FN75-2</id>
        <name>2</name>
        <sequence type="described" ref="VSP_057975 VSP_057976"/>
    </isoform>
</comment>
<comment type="similarity">
    <text evidence="4">Belongs to the AAA ATPase family. BCS1 subfamily.</text>
</comment>
<gene>
    <name evidence="5" type="ordered locus">At5g17760</name>
    <name evidence="6" type="ORF">MVA3.12</name>
</gene>
<keyword id="KW-0025">Alternative splicing</keyword>
<keyword id="KW-0067">ATP-binding</keyword>
<keyword id="KW-0378">Hydrolase</keyword>
<keyword id="KW-0460">Magnesium</keyword>
<keyword id="KW-0472">Membrane</keyword>
<keyword id="KW-0547">Nucleotide-binding</keyword>
<keyword id="KW-1185">Reference proteome</keyword>
<keyword id="KW-0812">Transmembrane</keyword>
<keyword id="KW-1133">Transmembrane helix</keyword>
<dbReference type="EC" id="3.6.1.-" evidence="1"/>
<dbReference type="EMBL" id="AB006706">
    <property type="protein sequence ID" value="BAB09575.1"/>
    <property type="molecule type" value="Genomic_DNA"/>
</dbReference>
<dbReference type="EMBL" id="CP002688">
    <property type="protein sequence ID" value="AED92464.1"/>
    <property type="molecule type" value="Genomic_DNA"/>
</dbReference>
<dbReference type="EMBL" id="CP002688">
    <property type="protein sequence ID" value="AED92465.1"/>
    <property type="molecule type" value="Genomic_DNA"/>
</dbReference>
<dbReference type="RefSeq" id="NP_568357.1">
    <molecule id="Q9FN75-2"/>
    <property type="nucleotide sequence ID" value="NM_121782.3"/>
</dbReference>
<dbReference type="RefSeq" id="NP_850841.1">
    <molecule id="Q9FN75-1"/>
    <property type="nucleotide sequence ID" value="NM_180510.2"/>
</dbReference>
<dbReference type="SMR" id="Q9FN75"/>
<dbReference type="FunCoup" id="Q9FN75">
    <property type="interactions" value="1432"/>
</dbReference>
<dbReference type="STRING" id="3702.Q9FN75"/>
<dbReference type="iPTMnet" id="Q9FN75"/>
<dbReference type="PaxDb" id="3702-AT5G17760.1"/>
<dbReference type="ProteomicsDB" id="244612">
    <molecule id="Q9FN75-1"/>
</dbReference>
<dbReference type="EnsemblPlants" id="AT5G17760.1">
    <molecule id="Q9FN75-1"/>
    <property type="protein sequence ID" value="AT5G17760.1"/>
    <property type="gene ID" value="AT5G17760"/>
</dbReference>
<dbReference type="EnsemblPlants" id="AT5G17760.2">
    <molecule id="Q9FN75-2"/>
    <property type="protein sequence ID" value="AT5G17760.2"/>
    <property type="gene ID" value="AT5G17760"/>
</dbReference>
<dbReference type="GeneID" id="831644"/>
<dbReference type="Gramene" id="AT5G17760.1">
    <molecule id="Q9FN75-1"/>
    <property type="protein sequence ID" value="AT5G17760.1"/>
    <property type="gene ID" value="AT5G17760"/>
</dbReference>
<dbReference type="Gramene" id="AT5G17760.2">
    <molecule id="Q9FN75-2"/>
    <property type="protein sequence ID" value="AT5G17760.2"/>
    <property type="gene ID" value="AT5G17760"/>
</dbReference>
<dbReference type="KEGG" id="ath:AT5G17760"/>
<dbReference type="Araport" id="AT5G17760"/>
<dbReference type="TAIR" id="AT5G17760"/>
<dbReference type="eggNOG" id="KOG0743">
    <property type="taxonomic scope" value="Eukaryota"/>
</dbReference>
<dbReference type="HOGENOM" id="CLU_010189_0_1_1"/>
<dbReference type="InParanoid" id="Q9FN75"/>
<dbReference type="OMA" id="IKWESIN"/>
<dbReference type="PhylomeDB" id="Q9FN75"/>
<dbReference type="PRO" id="PR:Q9FN75"/>
<dbReference type="Proteomes" id="UP000006548">
    <property type="component" value="Chromosome 5"/>
</dbReference>
<dbReference type="ExpressionAtlas" id="Q9FN75">
    <property type="expression patterns" value="baseline and differential"/>
</dbReference>
<dbReference type="GO" id="GO:0005886">
    <property type="term" value="C:plasma membrane"/>
    <property type="evidence" value="ECO:0007005"/>
    <property type="project" value="TAIR"/>
</dbReference>
<dbReference type="GO" id="GO:0005524">
    <property type="term" value="F:ATP binding"/>
    <property type="evidence" value="ECO:0007669"/>
    <property type="project" value="UniProtKB-KW"/>
</dbReference>
<dbReference type="GO" id="GO:0016887">
    <property type="term" value="F:ATP hydrolysis activity"/>
    <property type="evidence" value="ECO:0007669"/>
    <property type="project" value="InterPro"/>
</dbReference>
<dbReference type="GO" id="GO:0006950">
    <property type="term" value="P:response to stress"/>
    <property type="evidence" value="ECO:0007669"/>
    <property type="project" value="UniProtKB-ARBA"/>
</dbReference>
<dbReference type="CDD" id="cd19510">
    <property type="entry name" value="RecA-like_BCS1"/>
    <property type="match status" value="1"/>
</dbReference>
<dbReference type="FunFam" id="3.40.50.300:FF:001122">
    <property type="entry name" value="AAA-ATPase ASD, mitochondrial"/>
    <property type="match status" value="1"/>
</dbReference>
<dbReference type="Gene3D" id="6.10.280.40">
    <property type="match status" value="1"/>
</dbReference>
<dbReference type="Gene3D" id="3.40.50.300">
    <property type="entry name" value="P-loop containing nucleotide triphosphate hydrolases"/>
    <property type="match status" value="1"/>
</dbReference>
<dbReference type="InterPro" id="IPR003593">
    <property type="entry name" value="AAA+_ATPase"/>
</dbReference>
<dbReference type="InterPro" id="IPR025753">
    <property type="entry name" value="AAA_N_dom"/>
</dbReference>
<dbReference type="InterPro" id="IPR003959">
    <property type="entry name" value="ATPase_AAA_core"/>
</dbReference>
<dbReference type="InterPro" id="IPR003960">
    <property type="entry name" value="ATPase_AAA_CS"/>
</dbReference>
<dbReference type="InterPro" id="IPR050747">
    <property type="entry name" value="Mitochondrial_chaperone_BCS1"/>
</dbReference>
<dbReference type="InterPro" id="IPR027417">
    <property type="entry name" value="P-loop_NTPase"/>
</dbReference>
<dbReference type="PANTHER" id="PTHR23070">
    <property type="entry name" value="BCS1 AAA-TYPE ATPASE"/>
    <property type="match status" value="1"/>
</dbReference>
<dbReference type="Pfam" id="PF00004">
    <property type="entry name" value="AAA"/>
    <property type="match status" value="1"/>
</dbReference>
<dbReference type="Pfam" id="PF14363">
    <property type="entry name" value="AAA_assoc"/>
    <property type="match status" value="1"/>
</dbReference>
<dbReference type="SMART" id="SM00382">
    <property type="entry name" value="AAA"/>
    <property type="match status" value="1"/>
</dbReference>
<dbReference type="SUPFAM" id="SSF52540">
    <property type="entry name" value="P-loop containing nucleoside triphosphate hydrolases"/>
    <property type="match status" value="1"/>
</dbReference>
<dbReference type="PROSITE" id="PS00674">
    <property type="entry name" value="AAA"/>
    <property type="match status" value="1"/>
</dbReference>
<evidence type="ECO:0000250" key="1">
    <source>
        <dbReference type="UniProtKB" id="Q9FLD5"/>
    </source>
</evidence>
<evidence type="ECO:0000255" key="2"/>
<evidence type="ECO:0000256" key="3">
    <source>
        <dbReference type="SAM" id="MobiDB-lite"/>
    </source>
</evidence>
<evidence type="ECO:0000305" key="4"/>
<evidence type="ECO:0000312" key="5">
    <source>
        <dbReference type="EMBL" id="AED92464.1"/>
    </source>
</evidence>
<evidence type="ECO:0000312" key="6">
    <source>
        <dbReference type="EMBL" id="BAB09575.1"/>
    </source>
</evidence>
<evidence type="ECO:0000312" key="7">
    <source>
        <dbReference type="Proteomes" id="UP000006548"/>
    </source>
</evidence>
<name>AATPI_ARATH</name>
<sequence length="505" mass="57459">MFFSKDLPSPTSVFTAYASMAGYMMMIRSMAHELIPAPLQDFIYRTLRSLFFRSSSSTLTLTIDDDNMGMNNEIYRAAQTYLSTKISPDAVRLRISKGHKDKHVNLYLSDGEIVNDVYEDVQLVWRFVTDGGDKKGGGGGVGGRGGGGGRRGGMDDDGKSEYFELSFDKKHKDLILNSYVPYIESKAKEIRDERRILMLHSLNSLRWESVILEHPSTFETMAMEDDLKRDVIEDLDRFIRRKEFYKRVGKAWKRGYLLYGPPGTGKSSLVAAMANYLKFDVYDLQLASVMRDSDLRRLLLATRNRSILVIEDIDCAVDLPNRIEQPVEGKNRGESQGPLTLSGLLNFIDGLWSSCGDERIIIFTTNHKDRLDPALLRPGRMDMHIYMGHCSFQGFKTLASNYLGLSDAAMPHRLFPEIERLIDGEVMTPAQVAEELMKSEDADVALEGLVNVLEKMRLKSKESNPVMMKQKESRLEMEEMRLKSDTEGSPRKNSKRFKKLVLFWT</sequence>
<feature type="chain" id="PRO_0000434720" description="AAA-ATPase At5g17760">
    <location>
        <begin position="1"/>
        <end position="505"/>
    </location>
</feature>
<feature type="transmembrane region" description="Helical" evidence="2">
    <location>
        <begin position="11"/>
        <end position="27"/>
    </location>
</feature>
<feature type="region of interest" description="Disordered" evidence="3">
    <location>
        <begin position="136"/>
        <end position="155"/>
    </location>
</feature>
<feature type="compositionally biased region" description="Gly residues" evidence="3">
    <location>
        <begin position="137"/>
        <end position="151"/>
    </location>
</feature>
<feature type="binding site" evidence="2">
    <location>
        <begin position="260"/>
        <end position="267"/>
    </location>
    <ligand>
        <name>ATP</name>
        <dbReference type="ChEBI" id="CHEBI:30616"/>
    </ligand>
</feature>
<feature type="splice variant" id="VSP_057975" description="In isoform 2.">
    <original>GPLTL</original>
    <variation>VRFLL</variation>
    <location>
        <begin position="337"/>
        <end position="341"/>
    </location>
</feature>
<feature type="splice variant" id="VSP_057976" description="In isoform 2.">
    <location>
        <begin position="342"/>
        <end position="505"/>
    </location>
</feature>
<reference key="1">
    <citation type="journal article" date="1997" name="DNA Res.">
        <title>Structural analysis of Arabidopsis thaliana chromosome 5. II. Sequence features of the regions of 1,044,062 bp covered by thirteen physically assigned P1 clones.</title>
        <authorList>
            <person name="Kotani H."/>
            <person name="Nakamura Y."/>
            <person name="Sato S."/>
            <person name="Kaneko T."/>
            <person name="Asamizu E."/>
            <person name="Miyajima N."/>
            <person name="Tabata S."/>
        </authorList>
    </citation>
    <scope>NUCLEOTIDE SEQUENCE [LARGE SCALE GENOMIC DNA]</scope>
    <source>
        <strain>cv. Columbia</strain>
    </source>
</reference>
<reference key="2">
    <citation type="journal article" date="2017" name="Plant J.">
        <title>Araport11: a complete reannotation of the Arabidopsis thaliana reference genome.</title>
        <authorList>
            <person name="Cheng C.Y."/>
            <person name="Krishnakumar V."/>
            <person name="Chan A.P."/>
            <person name="Thibaud-Nissen F."/>
            <person name="Schobel S."/>
            <person name="Town C.D."/>
        </authorList>
    </citation>
    <scope>GENOME REANNOTATION</scope>
    <source>
        <strain>cv. Columbia</strain>
    </source>
</reference>
<accession>Q9FN75</accession>
<accession>Q3E9G3</accession>
<protein>
    <recommendedName>
        <fullName>AAA-ATPase At5g17760</fullName>
        <ecNumber evidence="1">3.6.1.-</ecNumber>
    </recommendedName>
</protein>
<proteinExistence type="inferred from homology"/>